<name>TBB1_COLGL</name>
<comment type="function">
    <text>Tubulin is the major constituent of microtubules, a cylinder consisting of laterally associated linear protofilaments composed of alpha- and beta-tubulin heterodimers. Microtubules grow by the addition of GTP-tubulin dimers to the microtubule end, where a stabilizing cap forms. Below the cap, tubulin dimers are in GDP-bound state, owing to GTPase activity of alpha-tubulin.</text>
</comment>
<comment type="cofactor">
    <cofactor evidence="1">
        <name>Mg(2+)</name>
        <dbReference type="ChEBI" id="CHEBI:18420"/>
    </cofactor>
</comment>
<comment type="subunit">
    <text>Dimer of alpha and beta chains. A typical microtubule is a hollow water-filled tube with an outer diameter of 25 nm and an inner diameter of 15 nM. Alpha-beta heterodimers associate head-to-tail to form protofilaments running lengthwise along the microtubule wall with the beta-tubulin subunit facing the microtubule plus end conferring a structural polarity. Microtubules usually have 13 protofilaments but different protofilament numbers can be found in some organisms and specialized cells.</text>
</comment>
<comment type="subcellular location">
    <subcellularLocation>
        <location>Cytoplasm</location>
        <location>Cytoskeleton</location>
    </subcellularLocation>
</comment>
<comment type="similarity">
    <text evidence="4">Belongs to the tubulin family.</text>
</comment>
<reference key="1">
    <citation type="journal article" date="1993" name="Gene">
        <title>Isolation and characterization of a beta-tubulin-encoding gene from Colletotrichum gloeosporioides f. sp. aeschynomene.</title>
        <authorList>
            <person name="Buhr T.L."/>
            <person name="Dickman M.B."/>
        </authorList>
    </citation>
    <scope>NUCLEOTIDE SEQUENCE [GENOMIC DNA]</scope>
    <source>
        <strain>Sp. aeschynomene</strain>
    </source>
</reference>
<keyword id="KW-0963">Cytoplasm</keyword>
<keyword id="KW-0206">Cytoskeleton</keyword>
<keyword id="KW-0342">GTP-binding</keyword>
<keyword id="KW-0460">Magnesium</keyword>
<keyword id="KW-0479">Metal-binding</keyword>
<keyword id="KW-0493">Microtubule</keyword>
<keyword id="KW-0547">Nucleotide-binding</keyword>
<evidence type="ECO:0000250" key="1">
    <source>
        <dbReference type="UniProtKB" id="P68363"/>
    </source>
</evidence>
<evidence type="ECO:0000250" key="2">
    <source>
        <dbReference type="UniProtKB" id="Q13509"/>
    </source>
</evidence>
<evidence type="ECO:0000256" key="3">
    <source>
        <dbReference type="SAM" id="MobiDB-lite"/>
    </source>
</evidence>
<evidence type="ECO:0000305" key="4"/>
<dbReference type="EMBL" id="M90977">
    <property type="protein sequence ID" value="AAA33044.1"/>
    <property type="molecule type" value="Genomic_DNA"/>
</dbReference>
<dbReference type="SMR" id="P32928"/>
<dbReference type="GO" id="GO:0005737">
    <property type="term" value="C:cytoplasm"/>
    <property type="evidence" value="ECO:0007669"/>
    <property type="project" value="UniProtKB-KW"/>
</dbReference>
<dbReference type="GO" id="GO:0005874">
    <property type="term" value="C:microtubule"/>
    <property type="evidence" value="ECO:0007669"/>
    <property type="project" value="UniProtKB-KW"/>
</dbReference>
<dbReference type="GO" id="GO:0005525">
    <property type="term" value="F:GTP binding"/>
    <property type="evidence" value="ECO:0007669"/>
    <property type="project" value="UniProtKB-KW"/>
</dbReference>
<dbReference type="GO" id="GO:0003924">
    <property type="term" value="F:GTPase activity"/>
    <property type="evidence" value="ECO:0007669"/>
    <property type="project" value="InterPro"/>
</dbReference>
<dbReference type="GO" id="GO:0046872">
    <property type="term" value="F:metal ion binding"/>
    <property type="evidence" value="ECO:0007669"/>
    <property type="project" value="UniProtKB-KW"/>
</dbReference>
<dbReference type="GO" id="GO:0005200">
    <property type="term" value="F:structural constituent of cytoskeleton"/>
    <property type="evidence" value="ECO:0007669"/>
    <property type="project" value="InterPro"/>
</dbReference>
<dbReference type="GO" id="GO:0007017">
    <property type="term" value="P:microtubule-based process"/>
    <property type="evidence" value="ECO:0007669"/>
    <property type="project" value="InterPro"/>
</dbReference>
<dbReference type="CDD" id="cd02187">
    <property type="entry name" value="beta_tubulin"/>
    <property type="match status" value="1"/>
</dbReference>
<dbReference type="FunFam" id="1.10.287.600:FF:000006">
    <property type="entry name" value="Tubulin beta chain"/>
    <property type="match status" value="1"/>
</dbReference>
<dbReference type="FunFam" id="3.30.1330.20:FF:000009">
    <property type="entry name" value="Tubulin beta chain"/>
    <property type="match status" value="1"/>
</dbReference>
<dbReference type="FunFam" id="3.40.50.1440:FF:000006">
    <property type="entry name" value="Tubulin beta chain"/>
    <property type="match status" value="1"/>
</dbReference>
<dbReference type="Gene3D" id="1.10.287.600">
    <property type="entry name" value="Helix hairpin bin"/>
    <property type="match status" value="1"/>
</dbReference>
<dbReference type="Gene3D" id="3.30.1330.20">
    <property type="entry name" value="Tubulin/FtsZ, C-terminal domain"/>
    <property type="match status" value="1"/>
</dbReference>
<dbReference type="Gene3D" id="3.40.50.1440">
    <property type="entry name" value="Tubulin/FtsZ, GTPase domain"/>
    <property type="match status" value="1"/>
</dbReference>
<dbReference type="InterPro" id="IPR013838">
    <property type="entry name" value="Beta-tubulin_BS"/>
</dbReference>
<dbReference type="InterPro" id="IPR002453">
    <property type="entry name" value="Beta_tubulin"/>
</dbReference>
<dbReference type="InterPro" id="IPR008280">
    <property type="entry name" value="Tub_FtsZ_C"/>
</dbReference>
<dbReference type="InterPro" id="IPR000217">
    <property type="entry name" value="Tubulin"/>
</dbReference>
<dbReference type="InterPro" id="IPR037103">
    <property type="entry name" value="Tubulin/FtsZ-like_C"/>
</dbReference>
<dbReference type="InterPro" id="IPR018316">
    <property type="entry name" value="Tubulin/FtsZ_2-layer-sand-dom"/>
</dbReference>
<dbReference type="InterPro" id="IPR036525">
    <property type="entry name" value="Tubulin/FtsZ_GTPase_sf"/>
</dbReference>
<dbReference type="InterPro" id="IPR023123">
    <property type="entry name" value="Tubulin_C"/>
</dbReference>
<dbReference type="InterPro" id="IPR017975">
    <property type="entry name" value="Tubulin_CS"/>
</dbReference>
<dbReference type="InterPro" id="IPR003008">
    <property type="entry name" value="Tubulin_FtsZ_GTPase"/>
</dbReference>
<dbReference type="PANTHER" id="PTHR11588">
    <property type="entry name" value="TUBULIN"/>
    <property type="match status" value="1"/>
</dbReference>
<dbReference type="Pfam" id="PF00091">
    <property type="entry name" value="Tubulin"/>
    <property type="match status" value="1"/>
</dbReference>
<dbReference type="Pfam" id="PF03953">
    <property type="entry name" value="Tubulin_C"/>
    <property type="match status" value="1"/>
</dbReference>
<dbReference type="PRINTS" id="PR01163">
    <property type="entry name" value="BETATUBULIN"/>
</dbReference>
<dbReference type="PRINTS" id="PR01161">
    <property type="entry name" value="TUBULIN"/>
</dbReference>
<dbReference type="SMART" id="SM00864">
    <property type="entry name" value="Tubulin"/>
    <property type="match status" value="1"/>
</dbReference>
<dbReference type="SMART" id="SM00865">
    <property type="entry name" value="Tubulin_C"/>
    <property type="match status" value="1"/>
</dbReference>
<dbReference type="SUPFAM" id="SSF55307">
    <property type="entry name" value="Tubulin C-terminal domain-like"/>
    <property type="match status" value="1"/>
</dbReference>
<dbReference type="SUPFAM" id="SSF52490">
    <property type="entry name" value="Tubulin nucleotide-binding domain-like"/>
    <property type="match status" value="1"/>
</dbReference>
<dbReference type="PROSITE" id="PS00227">
    <property type="entry name" value="TUBULIN"/>
    <property type="match status" value="1"/>
</dbReference>
<dbReference type="PROSITE" id="PS00228">
    <property type="entry name" value="TUBULIN_B_AUTOREG"/>
    <property type="match status" value="1"/>
</dbReference>
<gene>
    <name type="primary">TUB1</name>
</gene>
<proteinExistence type="inferred from homology"/>
<protein>
    <recommendedName>
        <fullName>Tubulin beta-1 chain</fullName>
    </recommendedName>
    <alternativeName>
        <fullName>Beta-1-tubulin</fullName>
    </alternativeName>
</protein>
<organism>
    <name type="scientific">Colletotrichum gloeosporioides</name>
    <name type="common">Anthracnose fungus</name>
    <name type="synonym">Glomerella cingulata</name>
    <dbReference type="NCBI Taxonomy" id="474922"/>
    <lineage>
        <taxon>Eukaryota</taxon>
        <taxon>Fungi</taxon>
        <taxon>Dikarya</taxon>
        <taxon>Ascomycota</taxon>
        <taxon>Pezizomycotina</taxon>
        <taxon>Sordariomycetes</taxon>
        <taxon>Hypocreomycetidae</taxon>
        <taxon>Glomerellales</taxon>
        <taxon>Glomerellaceae</taxon>
        <taxon>Colletotrichum</taxon>
        <taxon>Colletotrichum gloeosporioides species complex</taxon>
    </lineage>
</organism>
<sequence length="448" mass="50067">MREIIHLQTGQCLIQGNQVGTAFWQTIHHEHGLDHDGYFRGESTQQSDRLSVYFAEASNNKYVPRAVLVDLEPATMDAIRSGPLGNFFRPDNMVHGQSGAGNNWAKGHYTEGAELVDQVLDVVRREAETCDSLQGFQITHSLGGGTGSGMGTLLIAKVREEFPDRMMATFSVLPSPKVSEVVVEPYNATLSVHQLVENSDETFCIDNEALYDICRRTLKQAHPSYGDLNKLVSRVMSGLTTGFRFPGQLNADLRKLAVNLVPFPRLHFFTVGFAPLTTAAAYQNLGVAELTQQMFDPKNVMSASDFRNGRFLTCSAIYRGKVSTKQIEEQIRGVQAKNSAYFVEWIPNNVQTAHCSIPPVGMNASSTFIGNSTAIQDIFRRVGDQFSVMFRRKAFLHWYTGEGMDEMEFTEAESNMNDLVSEYQQYQDAGMDDDEAEEAYEEEEPVEE</sequence>
<feature type="chain" id="PRO_0000048401" description="Tubulin beta-1 chain">
    <location>
        <begin position="1"/>
        <end position="448"/>
    </location>
</feature>
<feature type="region of interest" description="Disordered" evidence="3">
    <location>
        <begin position="424"/>
        <end position="448"/>
    </location>
</feature>
<feature type="compositionally biased region" description="Acidic residues" evidence="3">
    <location>
        <begin position="430"/>
        <end position="448"/>
    </location>
</feature>
<feature type="binding site" evidence="2">
    <location>
        <position position="11"/>
    </location>
    <ligand>
        <name>GTP</name>
        <dbReference type="ChEBI" id="CHEBI:37565"/>
    </ligand>
</feature>
<feature type="binding site" evidence="1">
    <location>
        <position position="72"/>
    </location>
    <ligand>
        <name>GTP</name>
        <dbReference type="ChEBI" id="CHEBI:37565"/>
    </ligand>
</feature>
<feature type="binding site" evidence="1">
    <location>
        <position position="72"/>
    </location>
    <ligand>
        <name>Mg(2+)</name>
        <dbReference type="ChEBI" id="CHEBI:18420"/>
    </ligand>
</feature>
<feature type="binding site" evidence="2">
    <location>
        <position position="141"/>
    </location>
    <ligand>
        <name>GTP</name>
        <dbReference type="ChEBI" id="CHEBI:37565"/>
    </ligand>
</feature>
<feature type="binding site" evidence="2">
    <location>
        <position position="145"/>
    </location>
    <ligand>
        <name>GTP</name>
        <dbReference type="ChEBI" id="CHEBI:37565"/>
    </ligand>
</feature>
<feature type="binding site" evidence="2">
    <location>
        <position position="146"/>
    </location>
    <ligand>
        <name>GTP</name>
        <dbReference type="ChEBI" id="CHEBI:37565"/>
    </ligand>
</feature>
<feature type="binding site" evidence="2">
    <location>
        <position position="147"/>
    </location>
    <ligand>
        <name>GTP</name>
        <dbReference type="ChEBI" id="CHEBI:37565"/>
    </ligand>
</feature>
<feature type="binding site" evidence="2">
    <location>
        <position position="207"/>
    </location>
    <ligand>
        <name>GTP</name>
        <dbReference type="ChEBI" id="CHEBI:37565"/>
    </ligand>
</feature>
<feature type="binding site" evidence="2">
    <location>
        <position position="229"/>
    </location>
    <ligand>
        <name>GTP</name>
        <dbReference type="ChEBI" id="CHEBI:37565"/>
    </ligand>
</feature>
<accession>P32928</accession>